<evidence type="ECO:0000250" key="1">
    <source>
        <dbReference type="UniProtKB" id="P02542"/>
    </source>
</evidence>
<evidence type="ECO:0000250" key="2">
    <source>
        <dbReference type="UniProtKB" id="P17661"/>
    </source>
</evidence>
<evidence type="ECO:0000250" key="3">
    <source>
        <dbReference type="UniProtKB" id="P31001"/>
    </source>
</evidence>
<evidence type="ECO:0000250" key="4">
    <source>
        <dbReference type="UniProtKB" id="P48675"/>
    </source>
</evidence>
<evidence type="ECO:0000255" key="5">
    <source>
        <dbReference type="PROSITE-ProRule" id="PRU01188"/>
    </source>
</evidence>
<evidence type="ECO:0000269" key="6">
    <source>
    </source>
</evidence>
<proteinExistence type="evidence at protein level"/>
<comment type="function">
    <text evidence="2 3">Muscle-specific type III intermediate filament essential for proper muscular structure and function. Plays a crucial role in maintaining the structure of sarcomeres, inter-connecting the Z-disks and forming the myofibrils, linking them not only to the sarcolemmal cytoskeleton, but also to the nucleus and mitochondria, thus providing strength for the muscle fiber during activity. In adult striated muscle they form a fibrous network connecting myofibrils to each other and to the plasma membrane from the periphery of the Z-line structures. May act as a sarcomeric microtubule-anchoring protein: specifically associates with detyrosinated tubulin-alpha chains, leading to buckled microtubules and mechanical resistance to contraction. Required for nuclear membrane integrity, via anchoring at the cell tip and nuclear envelope, resulting in maintenance of microtubule-derived intracellular mechanical forces (By similarity). Contributes to the transcriptional regulation of the NKX2-5 gene in cardiac progenitor cells during a short period of cardiomyogenesis and in cardiac side population stem cells in the adult. Plays a role in maintaining an optimal conformation of nebulette (NEB) on heart muscle sarcomeres to bind and recruit cardiac alpha-actin.</text>
</comment>
<comment type="subunit">
    <text evidence="2 3 6">Homomer (PubMed:24413773). Interacts with DST (By similarity). Interacts with MTM1 (By similarity). Interacts with EPPK1; interaction is dependent of higher-order structure of intermediate filament (By similarity). Interacts with CRYAB (By similarity). Interacts with NEB (via nebulin repeats 160-164) (By similarity). Interacts (via rod region) with NEBL (via nebulin repeats 1-5) (By similarity). Interacts with ASB2; the interaction targets DES for proteasomal degradation (By similarity). Interacts with PKP1 (By similarity). Interacts with FLII (By similarity).</text>
</comment>
<comment type="subcellular location">
    <subcellularLocation>
        <location evidence="6">Cytoplasm</location>
        <location evidence="6">Myofibril</location>
        <location evidence="6">Sarcomere</location>
        <location evidence="6">Z line</location>
    </subcellularLocation>
    <subcellularLocation>
        <location evidence="2">Cytoplasm</location>
    </subcellularLocation>
    <subcellularLocation>
        <location evidence="2">Cell membrane</location>
        <location evidence="2">Sarcolemma</location>
    </subcellularLocation>
    <subcellularLocation>
        <location evidence="3">Nucleus</location>
    </subcellularLocation>
    <subcellularLocation>
        <location evidence="3">Cell tip</location>
    </subcellularLocation>
    <subcellularLocation>
        <location evidence="3">Nucleus envelope</location>
    </subcellularLocation>
    <text evidence="2 3">Localizes in the intercalated disks which occur at the Z line of cardiomyocytes. Localizes in the nucleus exclusively in differentiating cardiac progenitor cells and premature cardiomyocytes. PKP2 is required for correct anchoring of DES at the cell tip and nuclear envelope (By similarity).</text>
</comment>
<comment type="PTM">
    <text evidence="4">ADP-ribosylation prevents ability to form intermediate filaments.</text>
</comment>
<comment type="PTM">
    <text evidence="3">Phosphorylation at Ser-7, Ser-28 and Ser-32 by CDK1, phosphorylation at Ser-60 by AURKB and phosphorylation at Thr-76 by ROCK1 contribute to efficient separation of desmin intermediate filaments during mitosis.</text>
</comment>
<comment type="PTM">
    <text evidence="3">Ubiquitination by a SCF-like complex containing ASB2 leads to proteasomal degradation.</text>
</comment>
<comment type="similarity">
    <text evidence="5">Belongs to the intermediate filament family.</text>
</comment>
<keyword id="KW-0013">ADP-ribosylation</keyword>
<keyword id="KW-1003">Cell membrane</keyword>
<keyword id="KW-0175">Coiled coil</keyword>
<keyword id="KW-0963">Cytoplasm</keyword>
<keyword id="KW-0403">Intermediate filament</keyword>
<keyword id="KW-0472">Membrane</keyword>
<keyword id="KW-0488">Methylation</keyword>
<keyword id="KW-0514">Muscle protein</keyword>
<keyword id="KW-0539">Nucleus</keyword>
<keyword id="KW-0597">Phosphoprotein</keyword>
<keyword id="KW-1185">Reference proteome</keyword>
<keyword id="KW-0832">Ubl conjugation</keyword>
<feature type="initiator methionine" description="Removed" evidence="1">
    <location>
        <position position="1"/>
    </location>
</feature>
<feature type="chain" id="PRO_0000063770" description="Desmin">
    <location>
        <begin position="2"/>
        <end position="469"/>
    </location>
</feature>
<feature type="domain" description="IF rod" evidence="5">
    <location>
        <begin position="107"/>
        <end position="415"/>
    </location>
</feature>
<feature type="region of interest" description="Head">
    <location>
        <begin position="2"/>
        <end position="107"/>
    </location>
</feature>
<feature type="region of interest" description="Coil 1A">
    <location>
        <begin position="108"/>
        <end position="140"/>
    </location>
</feature>
<feature type="region of interest" description="Linker 1">
    <location>
        <begin position="141"/>
        <end position="150"/>
    </location>
</feature>
<feature type="region of interest" description="Coil 1B">
    <location>
        <begin position="151"/>
        <end position="251"/>
    </location>
</feature>
<feature type="region of interest" description="Linker 12">
    <location>
        <begin position="252"/>
        <end position="267"/>
    </location>
</feature>
<feature type="region of interest" description="Interaction with NEB" evidence="2">
    <location>
        <begin position="267"/>
        <end position="414"/>
    </location>
</feature>
<feature type="region of interest" description="Coil 2A">
    <location>
        <begin position="268"/>
        <end position="286"/>
    </location>
</feature>
<feature type="region of interest" description="Linker 2">
    <location>
        <begin position="287"/>
        <end position="294"/>
    </location>
</feature>
<feature type="region of interest" description="Coil 2B">
    <location>
        <begin position="295"/>
        <end position="411"/>
    </location>
</feature>
<feature type="region of interest" description="Tail">
    <location>
        <begin position="412"/>
        <end position="469"/>
    </location>
</feature>
<feature type="region of interest" description="Interaction with CRYAB" evidence="2">
    <location>
        <begin position="437"/>
        <end position="452"/>
    </location>
</feature>
<feature type="site" description="Stutter">
    <location>
        <position position="353"/>
    </location>
</feature>
<feature type="modified residue" description="Phosphoserine; by CDK1" evidence="3">
    <location>
        <position position="7"/>
    </location>
</feature>
<feature type="modified residue" description="Phosphoserine; by AURKB" evidence="2">
    <location>
        <position position="12"/>
    </location>
</feature>
<feature type="modified residue" description="Omega-N-methylarginine" evidence="3">
    <location>
        <position position="16"/>
    </location>
</feature>
<feature type="modified residue" description="Phosphothreonine; by AURKB and ROCK1" evidence="2">
    <location>
        <position position="17"/>
    </location>
</feature>
<feature type="modified residue" description="Phosphoserine; by CDK1" evidence="6">
    <location>
        <position position="28"/>
    </location>
</feature>
<feature type="modified residue" description="Phosphoserine; by CDK1" evidence="6">
    <location>
        <position position="32"/>
    </location>
</feature>
<feature type="modified residue" description="Asymmetric dimethylarginine; alternate" evidence="3">
    <location>
        <position position="37"/>
    </location>
</feature>
<feature type="modified residue" description="Omega-N-methylarginine; alternate" evidence="3">
    <location>
        <position position="37"/>
    </location>
</feature>
<feature type="modified residue" description="Phosphoserine" evidence="4">
    <location>
        <position position="45"/>
    </location>
</feature>
<feature type="modified residue" description="ADP-ribosylarginine" evidence="4">
    <location>
        <position position="58"/>
    </location>
</feature>
<feature type="modified residue" description="Phosphoserine; by AURKB" evidence="2">
    <location>
        <position position="60"/>
    </location>
</feature>
<feature type="modified residue" description="Omega-N-methylarginine" evidence="3">
    <location>
        <position position="70"/>
    </location>
</feature>
<feature type="modified residue" description="Phosphothreonine; by ROCK1" evidence="2">
    <location>
        <position position="76"/>
    </location>
</feature>
<feature type="modified residue" description="Phosphoserine" evidence="4">
    <location>
        <position position="81"/>
    </location>
</feature>
<feature type="modified residue" description="Phosphoserine" evidence="4">
    <location>
        <position position="289"/>
    </location>
</feature>
<feature type="modified residue" description="Phosphoserine" evidence="4">
    <location>
        <position position="357"/>
    </location>
</feature>
<feature type="modified residue" description="Phosphoserine" evidence="4">
    <location>
        <position position="360"/>
    </location>
</feature>
<feature type="modified residue" description="Phosphoserine" evidence="3">
    <location>
        <position position="423"/>
    </location>
</feature>
<name>DESM_CANLF</name>
<reference key="1">
    <citation type="journal article" date="2005" name="Nature">
        <title>Genome sequence, comparative analysis and haplotype structure of the domestic dog.</title>
        <authorList>
            <person name="Lindblad-Toh K."/>
            <person name="Wade C.M."/>
            <person name="Mikkelsen T.S."/>
            <person name="Karlsson E.K."/>
            <person name="Jaffe D.B."/>
            <person name="Kamal M."/>
            <person name="Clamp M."/>
            <person name="Chang J.L."/>
            <person name="Kulbokas E.J. III"/>
            <person name="Zody M.C."/>
            <person name="Mauceli E."/>
            <person name="Xie X."/>
            <person name="Breen M."/>
            <person name="Wayne R.K."/>
            <person name="Ostrander E.A."/>
            <person name="Ponting C.P."/>
            <person name="Galibert F."/>
            <person name="Smith D.R."/>
            <person name="deJong P.J."/>
            <person name="Kirkness E.F."/>
            <person name="Alvarez P."/>
            <person name="Biagi T."/>
            <person name="Brockman W."/>
            <person name="Butler J."/>
            <person name="Chin C.-W."/>
            <person name="Cook A."/>
            <person name="Cuff J."/>
            <person name="Daly M.J."/>
            <person name="DeCaprio D."/>
            <person name="Gnerre S."/>
            <person name="Grabherr M."/>
            <person name="Kellis M."/>
            <person name="Kleber M."/>
            <person name="Bardeleben C."/>
            <person name="Goodstadt L."/>
            <person name="Heger A."/>
            <person name="Hitte C."/>
            <person name="Kim L."/>
            <person name="Koepfli K.-P."/>
            <person name="Parker H.G."/>
            <person name="Pollinger J.P."/>
            <person name="Searle S.M.J."/>
            <person name="Sutter N.B."/>
            <person name="Thomas R."/>
            <person name="Webber C."/>
            <person name="Baldwin J."/>
            <person name="Abebe A."/>
            <person name="Abouelleil A."/>
            <person name="Aftuck L."/>
            <person name="Ait-Zahra M."/>
            <person name="Aldredge T."/>
            <person name="Allen N."/>
            <person name="An P."/>
            <person name="Anderson S."/>
            <person name="Antoine C."/>
            <person name="Arachchi H."/>
            <person name="Aslam A."/>
            <person name="Ayotte L."/>
            <person name="Bachantsang P."/>
            <person name="Barry A."/>
            <person name="Bayul T."/>
            <person name="Benamara M."/>
            <person name="Berlin A."/>
            <person name="Bessette D."/>
            <person name="Blitshteyn B."/>
            <person name="Bloom T."/>
            <person name="Blye J."/>
            <person name="Boguslavskiy L."/>
            <person name="Bonnet C."/>
            <person name="Boukhgalter B."/>
            <person name="Brown A."/>
            <person name="Cahill P."/>
            <person name="Calixte N."/>
            <person name="Camarata J."/>
            <person name="Cheshatsang Y."/>
            <person name="Chu J."/>
            <person name="Citroen M."/>
            <person name="Collymore A."/>
            <person name="Cooke P."/>
            <person name="Dawoe T."/>
            <person name="Daza R."/>
            <person name="Decktor K."/>
            <person name="DeGray S."/>
            <person name="Dhargay N."/>
            <person name="Dooley K."/>
            <person name="Dooley K."/>
            <person name="Dorje P."/>
            <person name="Dorjee K."/>
            <person name="Dorris L."/>
            <person name="Duffey N."/>
            <person name="Dupes A."/>
            <person name="Egbiremolen O."/>
            <person name="Elong R."/>
            <person name="Falk J."/>
            <person name="Farina A."/>
            <person name="Faro S."/>
            <person name="Ferguson D."/>
            <person name="Ferreira P."/>
            <person name="Fisher S."/>
            <person name="FitzGerald M."/>
            <person name="Foley K."/>
            <person name="Foley C."/>
            <person name="Franke A."/>
            <person name="Friedrich D."/>
            <person name="Gage D."/>
            <person name="Garber M."/>
            <person name="Gearin G."/>
            <person name="Giannoukos G."/>
            <person name="Goode T."/>
            <person name="Goyette A."/>
            <person name="Graham J."/>
            <person name="Grandbois E."/>
            <person name="Gyaltsen K."/>
            <person name="Hafez N."/>
            <person name="Hagopian D."/>
            <person name="Hagos B."/>
            <person name="Hall J."/>
            <person name="Healy C."/>
            <person name="Hegarty R."/>
            <person name="Honan T."/>
            <person name="Horn A."/>
            <person name="Houde N."/>
            <person name="Hughes L."/>
            <person name="Hunnicutt L."/>
            <person name="Husby M."/>
            <person name="Jester B."/>
            <person name="Jones C."/>
            <person name="Kamat A."/>
            <person name="Kanga B."/>
            <person name="Kells C."/>
            <person name="Khazanovich D."/>
            <person name="Kieu A.C."/>
            <person name="Kisner P."/>
            <person name="Kumar M."/>
            <person name="Lance K."/>
            <person name="Landers T."/>
            <person name="Lara M."/>
            <person name="Lee W."/>
            <person name="Leger J.-P."/>
            <person name="Lennon N."/>
            <person name="Leuper L."/>
            <person name="LeVine S."/>
            <person name="Liu J."/>
            <person name="Liu X."/>
            <person name="Lokyitsang Y."/>
            <person name="Lokyitsang T."/>
            <person name="Lui A."/>
            <person name="Macdonald J."/>
            <person name="Major J."/>
            <person name="Marabella R."/>
            <person name="Maru K."/>
            <person name="Matthews C."/>
            <person name="McDonough S."/>
            <person name="Mehta T."/>
            <person name="Meldrim J."/>
            <person name="Melnikov A."/>
            <person name="Meneus L."/>
            <person name="Mihalev A."/>
            <person name="Mihova T."/>
            <person name="Miller K."/>
            <person name="Mittelman R."/>
            <person name="Mlenga V."/>
            <person name="Mulrain L."/>
            <person name="Munson G."/>
            <person name="Navidi A."/>
            <person name="Naylor J."/>
            <person name="Nguyen T."/>
            <person name="Nguyen N."/>
            <person name="Nguyen C."/>
            <person name="Nguyen T."/>
            <person name="Nicol R."/>
            <person name="Norbu N."/>
            <person name="Norbu C."/>
            <person name="Novod N."/>
            <person name="Nyima T."/>
            <person name="Olandt P."/>
            <person name="O'Neill B."/>
            <person name="O'Neill K."/>
            <person name="Osman S."/>
            <person name="Oyono L."/>
            <person name="Patti C."/>
            <person name="Perrin D."/>
            <person name="Phunkhang P."/>
            <person name="Pierre F."/>
            <person name="Priest M."/>
            <person name="Rachupka A."/>
            <person name="Raghuraman S."/>
            <person name="Rameau R."/>
            <person name="Ray V."/>
            <person name="Raymond C."/>
            <person name="Rege F."/>
            <person name="Rise C."/>
            <person name="Rogers J."/>
            <person name="Rogov P."/>
            <person name="Sahalie J."/>
            <person name="Settipalli S."/>
            <person name="Sharpe T."/>
            <person name="Shea T."/>
            <person name="Sheehan M."/>
            <person name="Sherpa N."/>
            <person name="Shi J."/>
            <person name="Shih D."/>
            <person name="Sloan J."/>
            <person name="Smith C."/>
            <person name="Sparrow T."/>
            <person name="Stalker J."/>
            <person name="Stange-Thomann N."/>
            <person name="Stavropoulos S."/>
            <person name="Stone C."/>
            <person name="Stone S."/>
            <person name="Sykes S."/>
            <person name="Tchuinga P."/>
            <person name="Tenzing P."/>
            <person name="Tesfaye S."/>
            <person name="Thoulutsang D."/>
            <person name="Thoulutsang Y."/>
            <person name="Topham K."/>
            <person name="Topping I."/>
            <person name="Tsamla T."/>
            <person name="Vassiliev H."/>
            <person name="Venkataraman V."/>
            <person name="Vo A."/>
            <person name="Wangchuk T."/>
            <person name="Wangdi T."/>
            <person name="Weiand M."/>
            <person name="Wilkinson J."/>
            <person name="Wilson A."/>
            <person name="Yadav S."/>
            <person name="Yang S."/>
            <person name="Yang X."/>
            <person name="Young G."/>
            <person name="Yu Q."/>
            <person name="Zainoun J."/>
            <person name="Zembek L."/>
            <person name="Zimmer A."/>
            <person name="Lander E.S."/>
        </authorList>
    </citation>
    <scope>NUCLEOTIDE SEQUENCE [LARGE SCALE GENOMIC DNA]</scope>
    <source>
        <strain>Boxer</strain>
    </source>
</reference>
<reference key="2">
    <citation type="journal article" date="2004" name="Gene">
        <title>Characterization of the canine desmin (DES) gene and evaluation as a candidate gene for dilated cardiomyopathy in the Dobermann.</title>
        <authorList>
            <person name="Stabej P."/>
            <person name="Imholz S."/>
            <person name="Versteeg S.A."/>
            <person name="Zijlstra C."/>
            <person name="Stokhof A.A."/>
            <person name="Domanjko-Petric A."/>
            <person name="Leegwater P.A.J."/>
            <person name="van Oost B.A."/>
        </authorList>
    </citation>
    <scope>IDENTIFICATION</scope>
</reference>
<reference key="3">
    <citation type="journal article" date="2014" name="Cardiovasc. Res.">
        <title>Desmin modifications associate with amyloid-like oligomers deposition in heart failure.</title>
        <authorList>
            <person name="Agnetti G."/>
            <person name="Halperin V.L."/>
            <person name="Kirk J.A."/>
            <person name="Chakir K."/>
            <person name="Guo Y."/>
            <person name="Lund L."/>
            <person name="Nicolini F."/>
            <person name="Gherli T."/>
            <person name="Guarnieri C."/>
            <person name="Caldarera C.M."/>
            <person name="Tomaselli G.F."/>
            <person name="Kass D.A."/>
            <person name="Van Eyk J.E."/>
        </authorList>
    </citation>
    <scope>SUBUNIT</scope>
    <scope>SUBCELLULAR LOCATION</scope>
    <scope>PHOSPHORYLATION AT SER-28 AND SER-32</scope>
</reference>
<gene>
    <name type="primary">DES</name>
</gene>
<sequence length="469" mass="53321">MSQAYSSSQRVSSYRRTFGGAGGFPLGSPLGSPVFPRAGFGTKGSSSSVTSRVYQVSRTSGGAGGLGALRAGRLGTGRAPSYSAGELLDFSLADAVNQEFLTTRTNEKVELQELNDRFANYIEKVRFLEQQNAALAAEVNRLKGREPTRVAEIYEEELRELRRQVEVLTNQRARVDVERDNLLDDLQRLKAKLQEEIQLKEEAENNLAAFRADVDAATLARIDLERRIESLNEEIAFLKKVHEEEIRELQAQLQEQQVQVEMDMSKPDLTAALRDIRAQYETIAAKNISEAEEWYKSKVSDLTQAANKNNDALRQAKQEMMEYRHQIQSYTCEIDALKGTNDSLMRQMREMEDRFASEASGYQDNIARLEEEIRHLKDEMARHLREYQDLLNVKMALDVEIATYRKLLEGEESRINLPIQTYSALNFRETSPEQRGSEVHTKKTVMIKTIETRDGEVVSEATQQQHEVL</sequence>
<dbReference type="EMBL" id="BK005142">
    <property type="protein sequence ID" value="DAA05325.1"/>
    <property type="molecule type" value="Genomic_DNA"/>
</dbReference>
<dbReference type="RefSeq" id="NP_001012394.1">
    <property type="nucleotide sequence ID" value="NM_001012394.1"/>
</dbReference>
<dbReference type="SMR" id="Q5XFN2"/>
<dbReference type="FunCoup" id="Q5XFN2">
    <property type="interactions" value="41"/>
</dbReference>
<dbReference type="STRING" id="9615.ENSCAFP00000052382"/>
<dbReference type="iPTMnet" id="Q5XFN2"/>
<dbReference type="PaxDb" id="9612-ENSCAFP00000022792"/>
<dbReference type="Ensembl" id="ENSCAFT00030019567.1">
    <property type="protein sequence ID" value="ENSCAFP00030017065.1"/>
    <property type="gene ID" value="ENSCAFG00030010141.1"/>
</dbReference>
<dbReference type="Ensembl" id="ENSCAFT00040046751.1">
    <property type="protein sequence ID" value="ENSCAFP00040040807.1"/>
    <property type="gene ID" value="ENSCAFG00040025051.1"/>
</dbReference>
<dbReference type="GeneID" id="497091"/>
<dbReference type="KEGG" id="cfa:497091"/>
<dbReference type="CTD" id="1674"/>
<dbReference type="eggNOG" id="KOG0977">
    <property type="taxonomic scope" value="Eukaryota"/>
</dbReference>
<dbReference type="HOGENOM" id="CLU_012560_7_4_1"/>
<dbReference type="InParanoid" id="Q5XFN2"/>
<dbReference type="OMA" id="DMEERHG"/>
<dbReference type="OrthoDB" id="2441647at2759"/>
<dbReference type="TreeFam" id="TF330122"/>
<dbReference type="Reactome" id="R-CFA-390522">
    <property type="pathway name" value="Striated Muscle Contraction"/>
</dbReference>
<dbReference type="Proteomes" id="UP000002254">
    <property type="component" value="Unplaced"/>
</dbReference>
<dbReference type="Proteomes" id="UP000694429">
    <property type="component" value="Chromosome 37"/>
</dbReference>
<dbReference type="Proteomes" id="UP000694542">
    <property type="component" value="Chromosome 37"/>
</dbReference>
<dbReference type="Proteomes" id="UP000805418">
    <property type="component" value="Unplaced"/>
</dbReference>
<dbReference type="GO" id="GO:0051286">
    <property type="term" value="C:cell tip"/>
    <property type="evidence" value="ECO:0000250"/>
    <property type="project" value="UniProtKB"/>
</dbReference>
<dbReference type="GO" id="GO:0005911">
    <property type="term" value="C:cell-cell junction"/>
    <property type="evidence" value="ECO:0000318"/>
    <property type="project" value="GO_Central"/>
</dbReference>
<dbReference type="GO" id="GO:0005737">
    <property type="term" value="C:cytoplasm"/>
    <property type="evidence" value="ECO:0000250"/>
    <property type="project" value="UniProtKB"/>
</dbReference>
<dbReference type="GO" id="GO:0014704">
    <property type="term" value="C:intercalated disc"/>
    <property type="evidence" value="ECO:0000250"/>
    <property type="project" value="UniProtKB"/>
</dbReference>
<dbReference type="GO" id="GO:0005882">
    <property type="term" value="C:intermediate filament"/>
    <property type="evidence" value="ECO:0000318"/>
    <property type="project" value="GO_Central"/>
</dbReference>
<dbReference type="GO" id="GO:0005635">
    <property type="term" value="C:nuclear envelope"/>
    <property type="evidence" value="ECO:0000250"/>
    <property type="project" value="UniProtKB"/>
</dbReference>
<dbReference type="GO" id="GO:0005634">
    <property type="term" value="C:nucleus"/>
    <property type="evidence" value="ECO:0000250"/>
    <property type="project" value="UniProtKB"/>
</dbReference>
<dbReference type="GO" id="GO:0042383">
    <property type="term" value="C:sarcolemma"/>
    <property type="evidence" value="ECO:0000250"/>
    <property type="project" value="UniProtKB"/>
</dbReference>
<dbReference type="GO" id="GO:0030018">
    <property type="term" value="C:Z disc"/>
    <property type="evidence" value="ECO:0000314"/>
    <property type="project" value="UniProtKB"/>
</dbReference>
<dbReference type="GO" id="GO:0005200">
    <property type="term" value="F:structural constituent of cytoskeleton"/>
    <property type="evidence" value="ECO:0000318"/>
    <property type="project" value="GO_Central"/>
</dbReference>
<dbReference type="GO" id="GO:0045109">
    <property type="term" value="P:intermediate filament organization"/>
    <property type="evidence" value="ECO:0000250"/>
    <property type="project" value="UniProtKB"/>
</dbReference>
<dbReference type="GO" id="GO:0006998">
    <property type="term" value="P:nuclear envelope organization"/>
    <property type="evidence" value="ECO:0000250"/>
    <property type="project" value="UniProtKB"/>
</dbReference>
<dbReference type="GO" id="GO:0060538">
    <property type="term" value="P:skeletal muscle organ development"/>
    <property type="evidence" value="ECO:0000318"/>
    <property type="project" value="GO_Central"/>
</dbReference>
<dbReference type="FunFam" id="1.20.5.1160:FF:000001">
    <property type="entry name" value="Keratin type II"/>
    <property type="match status" value="1"/>
</dbReference>
<dbReference type="FunFam" id="1.20.5.170:FF:000002">
    <property type="entry name" value="Type I keratin KA11"/>
    <property type="match status" value="1"/>
</dbReference>
<dbReference type="FunFam" id="1.20.5.500:FF:000001">
    <property type="entry name" value="Type II keratin 23"/>
    <property type="match status" value="1"/>
</dbReference>
<dbReference type="Gene3D" id="1.20.5.170">
    <property type="match status" value="1"/>
</dbReference>
<dbReference type="Gene3D" id="1.20.5.500">
    <property type="entry name" value="Single helix bin"/>
    <property type="match status" value="1"/>
</dbReference>
<dbReference type="Gene3D" id="1.20.5.1160">
    <property type="entry name" value="Vasodilator-stimulated phosphoprotein"/>
    <property type="match status" value="1"/>
</dbReference>
<dbReference type="InterPro" id="IPR018039">
    <property type="entry name" value="IF_conserved"/>
</dbReference>
<dbReference type="InterPro" id="IPR039008">
    <property type="entry name" value="IF_rod_dom"/>
</dbReference>
<dbReference type="InterPro" id="IPR006821">
    <property type="entry name" value="Intermed_filament_DNA-bd"/>
</dbReference>
<dbReference type="InterPro" id="IPR050405">
    <property type="entry name" value="Intermediate_filament"/>
</dbReference>
<dbReference type="PANTHER" id="PTHR45652:SF2">
    <property type="entry name" value="DESMIN"/>
    <property type="match status" value="1"/>
</dbReference>
<dbReference type="PANTHER" id="PTHR45652">
    <property type="entry name" value="GLIAL FIBRILLARY ACIDIC PROTEIN"/>
    <property type="match status" value="1"/>
</dbReference>
<dbReference type="Pfam" id="PF00038">
    <property type="entry name" value="Filament"/>
    <property type="match status" value="1"/>
</dbReference>
<dbReference type="Pfam" id="PF04732">
    <property type="entry name" value="Filament_head"/>
    <property type="match status" value="1"/>
</dbReference>
<dbReference type="SMART" id="SM01391">
    <property type="entry name" value="Filament"/>
    <property type="match status" value="1"/>
</dbReference>
<dbReference type="SUPFAM" id="SSF64593">
    <property type="entry name" value="Intermediate filament protein, coiled coil region"/>
    <property type="match status" value="2"/>
</dbReference>
<dbReference type="PROSITE" id="PS00226">
    <property type="entry name" value="IF_ROD_1"/>
    <property type="match status" value="1"/>
</dbReference>
<dbReference type="PROSITE" id="PS51842">
    <property type="entry name" value="IF_ROD_2"/>
    <property type="match status" value="1"/>
</dbReference>
<protein>
    <recommendedName>
        <fullName>Desmin</fullName>
    </recommendedName>
</protein>
<accession>Q5XFN2</accession>
<organism>
    <name type="scientific">Canis lupus familiaris</name>
    <name type="common">Dog</name>
    <name type="synonym">Canis familiaris</name>
    <dbReference type="NCBI Taxonomy" id="9615"/>
    <lineage>
        <taxon>Eukaryota</taxon>
        <taxon>Metazoa</taxon>
        <taxon>Chordata</taxon>
        <taxon>Craniata</taxon>
        <taxon>Vertebrata</taxon>
        <taxon>Euteleostomi</taxon>
        <taxon>Mammalia</taxon>
        <taxon>Eutheria</taxon>
        <taxon>Laurasiatheria</taxon>
        <taxon>Carnivora</taxon>
        <taxon>Caniformia</taxon>
        <taxon>Canidae</taxon>
        <taxon>Canis</taxon>
    </lineage>
</organism>